<sequence>MADTVTSARATARYVRVTPMKARRVIDTVRGKSVEEALDILKYAPQSASEPVYKVVASAAANAENNFGLDRNSLVIAQAWADEGPTMRRFRPRAQGRAFHVRKRTSHITVVVESQKGSAQ</sequence>
<gene>
    <name evidence="1" type="primary">rplV</name>
    <name type="ordered locus">ckrop_1832</name>
</gene>
<proteinExistence type="inferred from homology"/>
<comment type="function">
    <text evidence="1">This protein binds specifically to 23S rRNA; its binding is stimulated by other ribosomal proteins, e.g. L4, L17, and L20. It is important during the early stages of 50S assembly. It makes multiple contacts with different domains of the 23S rRNA in the assembled 50S subunit and ribosome (By similarity).</text>
</comment>
<comment type="function">
    <text evidence="1">The globular domain of the protein is located near the polypeptide exit tunnel on the outside of the subunit, while an extended beta-hairpin is found that lines the wall of the exit tunnel in the center of the 70S ribosome.</text>
</comment>
<comment type="subunit">
    <text evidence="1">Part of the 50S ribosomal subunit.</text>
</comment>
<comment type="similarity">
    <text evidence="1">Belongs to the universal ribosomal protein uL22 family.</text>
</comment>
<organism>
    <name type="scientific">Corynebacterium kroppenstedtii (strain DSM 44385 / JCM 11950 / CIP 105744 / CCUG 35717)</name>
    <dbReference type="NCBI Taxonomy" id="645127"/>
    <lineage>
        <taxon>Bacteria</taxon>
        <taxon>Bacillati</taxon>
        <taxon>Actinomycetota</taxon>
        <taxon>Actinomycetes</taxon>
        <taxon>Mycobacteriales</taxon>
        <taxon>Corynebacteriaceae</taxon>
        <taxon>Corynebacterium</taxon>
    </lineage>
</organism>
<keyword id="KW-1185">Reference proteome</keyword>
<keyword id="KW-0687">Ribonucleoprotein</keyword>
<keyword id="KW-0689">Ribosomal protein</keyword>
<keyword id="KW-0694">RNA-binding</keyword>
<keyword id="KW-0699">rRNA-binding</keyword>
<dbReference type="EMBL" id="CP001620">
    <property type="protein sequence ID" value="ACR18552.1"/>
    <property type="molecule type" value="Genomic_DNA"/>
</dbReference>
<dbReference type="RefSeq" id="WP_012732439.1">
    <property type="nucleotide sequence ID" value="NC_012704.1"/>
</dbReference>
<dbReference type="SMR" id="C4LL47"/>
<dbReference type="STRING" id="645127.ckrop_1832"/>
<dbReference type="GeneID" id="92726629"/>
<dbReference type="KEGG" id="ckp:ckrop_1832"/>
<dbReference type="eggNOG" id="COG0091">
    <property type="taxonomic scope" value="Bacteria"/>
</dbReference>
<dbReference type="HOGENOM" id="CLU_083987_3_3_11"/>
<dbReference type="OrthoDB" id="9805969at2"/>
<dbReference type="Proteomes" id="UP000001473">
    <property type="component" value="Chromosome"/>
</dbReference>
<dbReference type="GO" id="GO:0022625">
    <property type="term" value="C:cytosolic large ribosomal subunit"/>
    <property type="evidence" value="ECO:0007669"/>
    <property type="project" value="TreeGrafter"/>
</dbReference>
<dbReference type="GO" id="GO:0019843">
    <property type="term" value="F:rRNA binding"/>
    <property type="evidence" value="ECO:0007669"/>
    <property type="project" value="UniProtKB-UniRule"/>
</dbReference>
<dbReference type="GO" id="GO:0003735">
    <property type="term" value="F:structural constituent of ribosome"/>
    <property type="evidence" value="ECO:0007669"/>
    <property type="project" value="InterPro"/>
</dbReference>
<dbReference type="GO" id="GO:0006412">
    <property type="term" value="P:translation"/>
    <property type="evidence" value="ECO:0007669"/>
    <property type="project" value="UniProtKB-UniRule"/>
</dbReference>
<dbReference type="CDD" id="cd00336">
    <property type="entry name" value="Ribosomal_L22"/>
    <property type="match status" value="1"/>
</dbReference>
<dbReference type="FunFam" id="3.90.470.10:FF:000002">
    <property type="entry name" value="50S ribosomal protein L22"/>
    <property type="match status" value="1"/>
</dbReference>
<dbReference type="Gene3D" id="3.90.470.10">
    <property type="entry name" value="Ribosomal protein L22/L17"/>
    <property type="match status" value="1"/>
</dbReference>
<dbReference type="HAMAP" id="MF_01331_B">
    <property type="entry name" value="Ribosomal_uL22_B"/>
    <property type="match status" value="1"/>
</dbReference>
<dbReference type="InterPro" id="IPR001063">
    <property type="entry name" value="Ribosomal_uL22"/>
</dbReference>
<dbReference type="InterPro" id="IPR005727">
    <property type="entry name" value="Ribosomal_uL22_bac/chlpt-type"/>
</dbReference>
<dbReference type="InterPro" id="IPR047867">
    <property type="entry name" value="Ribosomal_uL22_bac/org-type"/>
</dbReference>
<dbReference type="InterPro" id="IPR018260">
    <property type="entry name" value="Ribosomal_uL22_CS"/>
</dbReference>
<dbReference type="InterPro" id="IPR036394">
    <property type="entry name" value="Ribosomal_uL22_sf"/>
</dbReference>
<dbReference type="NCBIfam" id="TIGR01044">
    <property type="entry name" value="rplV_bact"/>
    <property type="match status" value="1"/>
</dbReference>
<dbReference type="PANTHER" id="PTHR13501">
    <property type="entry name" value="CHLOROPLAST 50S RIBOSOMAL PROTEIN L22-RELATED"/>
    <property type="match status" value="1"/>
</dbReference>
<dbReference type="PANTHER" id="PTHR13501:SF8">
    <property type="entry name" value="LARGE RIBOSOMAL SUBUNIT PROTEIN UL22M"/>
    <property type="match status" value="1"/>
</dbReference>
<dbReference type="Pfam" id="PF00237">
    <property type="entry name" value="Ribosomal_L22"/>
    <property type="match status" value="1"/>
</dbReference>
<dbReference type="SUPFAM" id="SSF54843">
    <property type="entry name" value="Ribosomal protein L22"/>
    <property type="match status" value="1"/>
</dbReference>
<dbReference type="PROSITE" id="PS00464">
    <property type="entry name" value="RIBOSOMAL_L22"/>
    <property type="match status" value="1"/>
</dbReference>
<accession>C4LL47</accession>
<evidence type="ECO:0000255" key="1">
    <source>
        <dbReference type="HAMAP-Rule" id="MF_01331"/>
    </source>
</evidence>
<evidence type="ECO:0000305" key="2"/>
<feature type="chain" id="PRO_1000214597" description="Large ribosomal subunit protein uL22">
    <location>
        <begin position="1"/>
        <end position="120"/>
    </location>
</feature>
<name>RL22_CORK4</name>
<reference key="1">
    <citation type="journal article" date="2008" name="J. Biotechnol.">
        <title>Ultrafast pyrosequencing of Corynebacterium kroppenstedtii DSM44385 revealed insights into the physiology of a lipophilic corynebacterium that lacks mycolic acids.</title>
        <authorList>
            <person name="Tauch A."/>
            <person name="Schneider J."/>
            <person name="Szczepanowski R."/>
            <person name="Tilker A."/>
            <person name="Viehoever P."/>
            <person name="Gartemann K.-H."/>
            <person name="Arnold W."/>
            <person name="Blom J."/>
            <person name="Brinkrolf K."/>
            <person name="Brune I."/>
            <person name="Goetker S."/>
            <person name="Weisshaar B."/>
            <person name="Goesmann A."/>
            <person name="Droege M."/>
            <person name="Puehler A."/>
        </authorList>
    </citation>
    <scope>NUCLEOTIDE SEQUENCE [LARGE SCALE GENOMIC DNA]</scope>
    <source>
        <strain>DSM 44385 / JCM 11950 / CIP 105744 / CCUG 35717</strain>
    </source>
</reference>
<protein>
    <recommendedName>
        <fullName evidence="1">Large ribosomal subunit protein uL22</fullName>
    </recommendedName>
    <alternativeName>
        <fullName evidence="2">50S ribosomal protein L22</fullName>
    </alternativeName>
</protein>